<name>AROC_PSEP1</name>
<gene>
    <name evidence="1" type="primary">aroC</name>
    <name type="ordered locus">Pput_3880</name>
</gene>
<organism>
    <name type="scientific">Pseudomonas putida (strain ATCC 700007 / DSM 6899 / JCM 31910 / BCRC 17059 / LMG 24140 / F1)</name>
    <dbReference type="NCBI Taxonomy" id="351746"/>
    <lineage>
        <taxon>Bacteria</taxon>
        <taxon>Pseudomonadati</taxon>
        <taxon>Pseudomonadota</taxon>
        <taxon>Gammaproteobacteria</taxon>
        <taxon>Pseudomonadales</taxon>
        <taxon>Pseudomonadaceae</taxon>
        <taxon>Pseudomonas</taxon>
    </lineage>
</organism>
<evidence type="ECO:0000255" key="1">
    <source>
        <dbReference type="HAMAP-Rule" id="MF_00300"/>
    </source>
</evidence>
<comment type="function">
    <text evidence="1">Catalyzes the anti-1,4-elimination of the C-3 phosphate and the C-6 proR hydrogen from 5-enolpyruvylshikimate-3-phosphate (EPSP) to yield chorismate, which is the branch point compound that serves as the starting substrate for the three terminal pathways of aromatic amino acid biosynthesis. This reaction introduces a second double bond into the aromatic ring system.</text>
</comment>
<comment type="catalytic activity">
    <reaction evidence="1">
        <text>5-O-(1-carboxyvinyl)-3-phosphoshikimate = chorismate + phosphate</text>
        <dbReference type="Rhea" id="RHEA:21020"/>
        <dbReference type="ChEBI" id="CHEBI:29748"/>
        <dbReference type="ChEBI" id="CHEBI:43474"/>
        <dbReference type="ChEBI" id="CHEBI:57701"/>
        <dbReference type="EC" id="4.2.3.5"/>
    </reaction>
</comment>
<comment type="cofactor">
    <cofactor evidence="1">
        <name>FMNH2</name>
        <dbReference type="ChEBI" id="CHEBI:57618"/>
    </cofactor>
    <text evidence="1">Reduced FMN (FMNH(2)).</text>
</comment>
<comment type="pathway">
    <text evidence="1">Metabolic intermediate biosynthesis; chorismate biosynthesis; chorismate from D-erythrose 4-phosphate and phosphoenolpyruvate: step 7/7.</text>
</comment>
<comment type="subunit">
    <text evidence="1">Homotetramer.</text>
</comment>
<comment type="similarity">
    <text evidence="1">Belongs to the chorismate synthase family.</text>
</comment>
<sequence>MSGNTYGKLFTVTTAGESHGPALVAIVDGCPPGLEISLADLQHDLDRRKPGTSRHTTQRQEADEVEILSGVFEGRTTGCSIGLLIRNTDQKSKDYSAIKDLFRPAHADYTYHHKYGIRDYRGGGRSSARETAMRVAAGAIAKKFLATQGITVRGYMSQLGPIEIPFKTWESVEQNAFFSPDPDKVPELEAYMDQLRRDQDSVGAKITVVAEGVMPGLGEPIFDRLDAELAHALMSINAVKGVEIGAGFASVAQRGTEHRDELTPEGFLSNNAGGILGGISSGQPIVAHLALKPTSSITTPGRSIDVDGNPVDVITKGRHDPCVGIRATPIAEAMMAIALMDHLLRHRAQNADVQVNTPVLGQR</sequence>
<proteinExistence type="inferred from homology"/>
<accession>A5W794</accession>
<protein>
    <recommendedName>
        <fullName evidence="1">Chorismate synthase</fullName>
        <shortName evidence="1">CS</shortName>
        <ecNumber evidence="1">4.2.3.5</ecNumber>
    </recommendedName>
    <alternativeName>
        <fullName evidence="1">5-enolpyruvylshikimate-3-phosphate phospholyase</fullName>
    </alternativeName>
</protein>
<feature type="chain" id="PRO_1000022531" description="Chorismate synthase">
    <location>
        <begin position="1"/>
        <end position="363"/>
    </location>
</feature>
<feature type="binding site" evidence="1">
    <location>
        <position position="48"/>
    </location>
    <ligand>
        <name>NADP(+)</name>
        <dbReference type="ChEBI" id="CHEBI:58349"/>
    </ligand>
</feature>
<feature type="binding site" evidence="1">
    <location>
        <position position="54"/>
    </location>
    <ligand>
        <name>NADP(+)</name>
        <dbReference type="ChEBI" id="CHEBI:58349"/>
    </ligand>
</feature>
<feature type="binding site" evidence="1">
    <location>
        <begin position="125"/>
        <end position="127"/>
    </location>
    <ligand>
        <name>FMN</name>
        <dbReference type="ChEBI" id="CHEBI:58210"/>
    </ligand>
</feature>
<feature type="binding site" evidence="1">
    <location>
        <begin position="237"/>
        <end position="238"/>
    </location>
    <ligand>
        <name>FMN</name>
        <dbReference type="ChEBI" id="CHEBI:58210"/>
    </ligand>
</feature>
<feature type="binding site" evidence="1">
    <location>
        <position position="277"/>
    </location>
    <ligand>
        <name>FMN</name>
        <dbReference type="ChEBI" id="CHEBI:58210"/>
    </ligand>
</feature>
<feature type="binding site" evidence="1">
    <location>
        <begin position="292"/>
        <end position="296"/>
    </location>
    <ligand>
        <name>FMN</name>
        <dbReference type="ChEBI" id="CHEBI:58210"/>
    </ligand>
</feature>
<feature type="binding site" evidence="1">
    <location>
        <position position="318"/>
    </location>
    <ligand>
        <name>FMN</name>
        <dbReference type="ChEBI" id="CHEBI:58210"/>
    </ligand>
</feature>
<reference key="1">
    <citation type="submission" date="2007-05" db="EMBL/GenBank/DDBJ databases">
        <title>Complete sequence of Pseudomonas putida F1.</title>
        <authorList>
            <consortium name="US DOE Joint Genome Institute"/>
            <person name="Copeland A."/>
            <person name="Lucas S."/>
            <person name="Lapidus A."/>
            <person name="Barry K."/>
            <person name="Detter J.C."/>
            <person name="Glavina del Rio T."/>
            <person name="Hammon N."/>
            <person name="Israni S."/>
            <person name="Dalin E."/>
            <person name="Tice H."/>
            <person name="Pitluck S."/>
            <person name="Chain P."/>
            <person name="Malfatti S."/>
            <person name="Shin M."/>
            <person name="Vergez L."/>
            <person name="Schmutz J."/>
            <person name="Larimer F."/>
            <person name="Land M."/>
            <person name="Hauser L."/>
            <person name="Kyrpides N."/>
            <person name="Lykidis A."/>
            <person name="Parales R."/>
            <person name="Richardson P."/>
        </authorList>
    </citation>
    <scope>NUCLEOTIDE SEQUENCE [LARGE SCALE GENOMIC DNA]</scope>
    <source>
        <strain>ATCC 700007 / DSM 6899 / JCM 31910 / BCRC 17059 / LMG 24140 / F1</strain>
    </source>
</reference>
<dbReference type="EC" id="4.2.3.5" evidence="1"/>
<dbReference type="EMBL" id="CP000712">
    <property type="protein sequence ID" value="ABQ80004.1"/>
    <property type="molecule type" value="Genomic_DNA"/>
</dbReference>
<dbReference type="SMR" id="A5W794"/>
<dbReference type="KEGG" id="ppf:Pput_3880"/>
<dbReference type="eggNOG" id="COG0082">
    <property type="taxonomic scope" value="Bacteria"/>
</dbReference>
<dbReference type="HOGENOM" id="CLU_034547_0_2_6"/>
<dbReference type="UniPathway" id="UPA00053">
    <property type="reaction ID" value="UER00090"/>
</dbReference>
<dbReference type="GO" id="GO:0005829">
    <property type="term" value="C:cytosol"/>
    <property type="evidence" value="ECO:0007669"/>
    <property type="project" value="TreeGrafter"/>
</dbReference>
<dbReference type="GO" id="GO:0004107">
    <property type="term" value="F:chorismate synthase activity"/>
    <property type="evidence" value="ECO:0007669"/>
    <property type="project" value="UniProtKB-UniRule"/>
</dbReference>
<dbReference type="GO" id="GO:0010181">
    <property type="term" value="F:FMN binding"/>
    <property type="evidence" value="ECO:0007669"/>
    <property type="project" value="TreeGrafter"/>
</dbReference>
<dbReference type="GO" id="GO:0008652">
    <property type="term" value="P:amino acid biosynthetic process"/>
    <property type="evidence" value="ECO:0007669"/>
    <property type="project" value="UniProtKB-KW"/>
</dbReference>
<dbReference type="GO" id="GO:0009073">
    <property type="term" value="P:aromatic amino acid family biosynthetic process"/>
    <property type="evidence" value="ECO:0007669"/>
    <property type="project" value="UniProtKB-KW"/>
</dbReference>
<dbReference type="GO" id="GO:0009423">
    <property type="term" value="P:chorismate biosynthetic process"/>
    <property type="evidence" value="ECO:0007669"/>
    <property type="project" value="UniProtKB-UniRule"/>
</dbReference>
<dbReference type="CDD" id="cd07304">
    <property type="entry name" value="Chorismate_synthase"/>
    <property type="match status" value="1"/>
</dbReference>
<dbReference type="FunFam" id="3.60.150.10:FF:000001">
    <property type="entry name" value="Chorismate synthase"/>
    <property type="match status" value="1"/>
</dbReference>
<dbReference type="Gene3D" id="3.60.150.10">
    <property type="entry name" value="Chorismate synthase AroC"/>
    <property type="match status" value="1"/>
</dbReference>
<dbReference type="HAMAP" id="MF_00300">
    <property type="entry name" value="Chorismate_synth"/>
    <property type="match status" value="1"/>
</dbReference>
<dbReference type="InterPro" id="IPR000453">
    <property type="entry name" value="Chorismate_synth"/>
</dbReference>
<dbReference type="InterPro" id="IPR035904">
    <property type="entry name" value="Chorismate_synth_AroC_sf"/>
</dbReference>
<dbReference type="InterPro" id="IPR020541">
    <property type="entry name" value="Chorismate_synthase_CS"/>
</dbReference>
<dbReference type="NCBIfam" id="TIGR00033">
    <property type="entry name" value="aroC"/>
    <property type="match status" value="1"/>
</dbReference>
<dbReference type="NCBIfam" id="NF003793">
    <property type="entry name" value="PRK05382.1"/>
    <property type="match status" value="1"/>
</dbReference>
<dbReference type="PANTHER" id="PTHR21085">
    <property type="entry name" value="CHORISMATE SYNTHASE"/>
    <property type="match status" value="1"/>
</dbReference>
<dbReference type="PANTHER" id="PTHR21085:SF0">
    <property type="entry name" value="CHORISMATE SYNTHASE"/>
    <property type="match status" value="1"/>
</dbReference>
<dbReference type="Pfam" id="PF01264">
    <property type="entry name" value="Chorismate_synt"/>
    <property type="match status" value="1"/>
</dbReference>
<dbReference type="PIRSF" id="PIRSF001456">
    <property type="entry name" value="Chorismate_synth"/>
    <property type="match status" value="1"/>
</dbReference>
<dbReference type="SUPFAM" id="SSF103263">
    <property type="entry name" value="Chorismate synthase, AroC"/>
    <property type="match status" value="1"/>
</dbReference>
<dbReference type="PROSITE" id="PS00787">
    <property type="entry name" value="CHORISMATE_SYNTHASE_1"/>
    <property type="match status" value="1"/>
</dbReference>
<dbReference type="PROSITE" id="PS00788">
    <property type="entry name" value="CHORISMATE_SYNTHASE_2"/>
    <property type="match status" value="1"/>
</dbReference>
<dbReference type="PROSITE" id="PS00789">
    <property type="entry name" value="CHORISMATE_SYNTHASE_3"/>
    <property type="match status" value="1"/>
</dbReference>
<keyword id="KW-0028">Amino-acid biosynthesis</keyword>
<keyword id="KW-0057">Aromatic amino acid biosynthesis</keyword>
<keyword id="KW-0274">FAD</keyword>
<keyword id="KW-0285">Flavoprotein</keyword>
<keyword id="KW-0288">FMN</keyword>
<keyword id="KW-0456">Lyase</keyword>
<keyword id="KW-0521">NADP</keyword>